<sequence length="286" mass="31758">MNILTGTQRTSREKKKVKKLNLLVLLGVFCGVGAVGDADVKVSDALSQSILSEPRIRVLLLSESTTALVEAKGAFSVFGDGELLRVSSQGQRCAAHALYGGIRWGENYPNVECLKIEPLDGSASLFVNGIQYKGSVYIHKTERNCLFVVNELAIEDYLKSVLSVKYLKELDKEALSACVILERTALYERLLAGNANSFWHVNAQEDRYGGYGVTSQFYGVEEAVDWTSRLVLDNPEGLVFNADYLLQSNVDRLAIEGYNARQILEKFYKDADLVVIESWEDNNRGV</sequence>
<gene>
    <name type="ordered locus">TC_0311</name>
</gene>
<name>Y311_CHLMU</name>
<evidence type="ECO:0000305" key="1"/>
<comment type="similarity">
    <text evidence="1">Belongs to the chlamydial CPn_0389/CT_041/TC_0311 family.</text>
</comment>
<reference key="1">
    <citation type="journal article" date="2000" name="Nucleic Acids Res.">
        <title>Genome sequences of Chlamydia trachomatis MoPn and Chlamydia pneumoniae AR39.</title>
        <authorList>
            <person name="Read T.D."/>
            <person name="Brunham R.C."/>
            <person name="Shen C."/>
            <person name="Gill S.R."/>
            <person name="Heidelberg J.F."/>
            <person name="White O."/>
            <person name="Hickey E.K."/>
            <person name="Peterson J.D."/>
            <person name="Utterback T.R."/>
            <person name="Berry K.J."/>
            <person name="Bass S."/>
            <person name="Linher K.D."/>
            <person name="Weidman J.F."/>
            <person name="Khouri H.M."/>
            <person name="Craven B."/>
            <person name="Bowman C."/>
            <person name="Dodson R.J."/>
            <person name="Gwinn M.L."/>
            <person name="Nelson W.C."/>
            <person name="DeBoy R.T."/>
            <person name="Kolonay J.F."/>
            <person name="McClarty G."/>
            <person name="Salzberg S.L."/>
            <person name="Eisen J.A."/>
            <person name="Fraser C.M."/>
        </authorList>
    </citation>
    <scope>NUCLEOTIDE SEQUENCE [LARGE SCALE GENOMIC DNA]</scope>
    <source>
        <strain>MoPn / Nigg</strain>
    </source>
</reference>
<accession>Q9PKZ7</accession>
<feature type="chain" id="PRO_0000218372" description="Uncharacterized protein TC_0311">
    <location>
        <begin position="1"/>
        <end position="286"/>
    </location>
</feature>
<dbReference type="EMBL" id="AE002160">
    <property type="protein sequence ID" value="AAF39176.1"/>
    <property type="molecule type" value="Genomic_DNA"/>
</dbReference>
<dbReference type="PIR" id="F81717">
    <property type="entry name" value="F81717"/>
</dbReference>
<dbReference type="KEGG" id="cmu:TC_0311"/>
<dbReference type="PATRIC" id="fig|243161.6.peg.338"/>
<dbReference type="eggNOG" id="COG2385">
    <property type="taxonomic scope" value="Bacteria"/>
</dbReference>
<dbReference type="HOGENOM" id="CLU_089575_0_0_0"/>
<dbReference type="Proteomes" id="UP000000800">
    <property type="component" value="Chromosome"/>
</dbReference>
<dbReference type="InterPro" id="IPR013693">
    <property type="entry name" value="SpoIID/LytB_N"/>
</dbReference>
<dbReference type="Pfam" id="PF08486">
    <property type="entry name" value="SpoIID"/>
    <property type="match status" value="1"/>
</dbReference>
<proteinExistence type="inferred from homology"/>
<organism>
    <name type="scientific">Chlamydia muridarum (strain MoPn / Nigg)</name>
    <dbReference type="NCBI Taxonomy" id="243161"/>
    <lineage>
        <taxon>Bacteria</taxon>
        <taxon>Pseudomonadati</taxon>
        <taxon>Chlamydiota</taxon>
        <taxon>Chlamydiia</taxon>
        <taxon>Chlamydiales</taxon>
        <taxon>Chlamydiaceae</taxon>
        <taxon>Chlamydia/Chlamydophila group</taxon>
        <taxon>Chlamydia</taxon>
    </lineage>
</organism>
<protein>
    <recommendedName>
        <fullName>Uncharacterized protein TC_0311</fullName>
    </recommendedName>
</protein>